<sequence>MSKKNSQTSPQRQKMHVKKGDVVQVIAGSDKGKVGEILRALPQESTVVVKGVNIRTKHTKPQQEGESGQIVTYEAPIHSSKVMLYSEKKKIASRVGYTLTEDGRKVRILKKTGEIID</sequence>
<protein>
    <recommendedName>
        <fullName evidence="1">Large ribosomal subunit protein uL24</fullName>
    </recommendedName>
    <alternativeName>
        <fullName evidence="3">50S ribosomal protein L24</fullName>
    </alternativeName>
</protein>
<organism>
    <name type="scientific">Microcystis aeruginosa (strain NIES-843 / IAM M-2473)</name>
    <dbReference type="NCBI Taxonomy" id="449447"/>
    <lineage>
        <taxon>Bacteria</taxon>
        <taxon>Bacillati</taxon>
        <taxon>Cyanobacteriota</taxon>
        <taxon>Cyanophyceae</taxon>
        <taxon>Oscillatoriophycideae</taxon>
        <taxon>Chroococcales</taxon>
        <taxon>Microcystaceae</taxon>
        <taxon>Microcystis</taxon>
    </lineage>
</organism>
<reference key="1">
    <citation type="journal article" date="2007" name="DNA Res.">
        <title>Complete genomic structure of the bloom-forming toxic cyanobacterium Microcystis aeruginosa NIES-843.</title>
        <authorList>
            <person name="Kaneko T."/>
            <person name="Nakajima N."/>
            <person name="Okamoto S."/>
            <person name="Suzuki I."/>
            <person name="Tanabe Y."/>
            <person name="Tamaoki M."/>
            <person name="Nakamura Y."/>
            <person name="Kasai F."/>
            <person name="Watanabe A."/>
            <person name="Kawashima K."/>
            <person name="Kishida Y."/>
            <person name="Ono A."/>
            <person name="Shimizu Y."/>
            <person name="Takahashi C."/>
            <person name="Minami C."/>
            <person name="Fujishiro T."/>
            <person name="Kohara M."/>
            <person name="Katoh M."/>
            <person name="Nakazaki N."/>
            <person name="Nakayama S."/>
            <person name="Yamada M."/>
            <person name="Tabata S."/>
            <person name="Watanabe M.M."/>
        </authorList>
    </citation>
    <scope>NUCLEOTIDE SEQUENCE [LARGE SCALE GENOMIC DNA]</scope>
    <source>
        <strain>NIES-843 / IAM M-247</strain>
    </source>
</reference>
<comment type="function">
    <text evidence="1">One of two assembly initiator proteins, it binds directly to the 5'-end of the 23S rRNA, where it nucleates assembly of the 50S subunit.</text>
</comment>
<comment type="function">
    <text evidence="1">One of the proteins that surrounds the polypeptide exit tunnel on the outside of the subunit.</text>
</comment>
<comment type="subunit">
    <text evidence="1">Part of the 50S ribosomal subunit.</text>
</comment>
<comment type="similarity">
    <text evidence="1">Belongs to the universal ribosomal protein uL24 family.</text>
</comment>
<evidence type="ECO:0000255" key="1">
    <source>
        <dbReference type="HAMAP-Rule" id="MF_01326"/>
    </source>
</evidence>
<evidence type="ECO:0000256" key="2">
    <source>
        <dbReference type="SAM" id="MobiDB-lite"/>
    </source>
</evidence>
<evidence type="ECO:0000305" key="3"/>
<accession>B0JHZ2</accession>
<keyword id="KW-0687">Ribonucleoprotein</keyword>
<keyword id="KW-0689">Ribosomal protein</keyword>
<keyword id="KW-0694">RNA-binding</keyword>
<keyword id="KW-0699">rRNA-binding</keyword>
<gene>
    <name evidence="1" type="primary">rplX</name>
    <name evidence="1" type="synonym">rpl24</name>
    <name type="ordered locus">MAE_57320</name>
</gene>
<dbReference type="EMBL" id="AP009552">
    <property type="protein sequence ID" value="BAG05554.1"/>
    <property type="molecule type" value="Genomic_DNA"/>
</dbReference>
<dbReference type="RefSeq" id="WP_012267965.1">
    <property type="nucleotide sequence ID" value="NC_010296.1"/>
</dbReference>
<dbReference type="SMR" id="B0JHZ2"/>
<dbReference type="STRING" id="449447.MAE_57320"/>
<dbReference type="PaxDb" id="449447-MAE_57320"/>
<dbReference type="EnsemblBacteria" id="BAG05554">
    <property type="protein sequence ID" value="BAG05554"/>
    <property type="gene ID" value="MAE_57320"/>
</dbReference>
<dbReference type="KEGG" id="mar:MAE_57320"/>
<dbReference type="PATRIC" id="fig|449447.4.peg.5241"/>
<dbReference type="eggNOG" id="COG0198">
    <property type="taxonomic scope" value="Bacteria"/>
</dbReference>
<dbReference type="HOGENOM" id="CLU_093315_2_0_3"/>
<dbReference type="BioCyc" id="MAER449447:MAE_RS24975-MONOMER"/>
<dbReference type="Proteomes" id="UP000001510">
    <property type="component" value="Chromosome"/>
</dbReference>
<dbReference type="GO" id="GO:1990904">
    <property type="term" value="C:ribonucleoprotein complex"/>
    <property type="evidence" value="ECO:0007669"/>
    <property type="project" value="UniProtKB-KW"/>
</dbReference>
<dbReference type="GO" id="GO:0005840">
    <property type="term" value="C:ribosome"/>
    <property type="evidence" value="ECO:0007669"/>
    <property type="project" value="UniProtKB-KW"/>
</dbReference>
<dbReference type="GO" id="GO:0019843">
    <property type="term" value="F:rRNA binding"/>
    <property type="evidence" value="ECO:0007669"/>
    <property type="project" value="UniProtKB-UniRule"/>
</dbReference>
<dbReference type="GO" id="GO:0003735">
    <property type="term" value="F:structural constituent of ribosome"/>
    <property type="evidence" value="ECO:0007669"/>
    <property type="project" value="InterPro"/>
</dbReference>
<dbReference type="GO" id="GO:0006412">
    <property type="term" value="P:translation"/>
    <property type="evidence" value="ECO:0007669"/>
    <property type="project" value="UniProtKB-UniRule"/>
</dbReference>
<dbReference type="CDD" id="cd06089">
    <property type="entry name" value="KOW_RPL26"/>
    <property type="match status" value="1"/>
</dbReference>
<dbReference type="FunFam" id="2.30.30.30:FF:000004">
    <property type="entry name" value="50S ribosomal protein L24"/>
    <property type="match status" value="1"/>
</dbReference>
<dbReference type="Gene3D" id="2.30.30.30">
    <property type="match status" value="1"/>
</dbReference>
<dbReference type="HAMAP" id="MF_01326_B">
    <property type="entry name" value="Ribosomal_uL24_B"/>
    <property type="match status" value="1"/>
</dbReference>
<dbReference type="InterPro" id="IPR005824">
    <property type="entry name" value="KOW"/>
</dbReference>
<dbReference type="InterPro" id="IPR014722">
    <property type="entry name" value="Rib_uL2_dom2"/>
</dbReference>
<dbReference type="InterPro" id="IPR003256">
    <property type="entry name" value="Ribosomal_uL24"/>
</dbReference>
<dbReference type="InterPro" id="IPR005825">
    <property type="entry name" value="Ribosomal_uL24_CS"/>
</dbReference>
<dbReference type="InterPro" id="IPR041988">
    <property type="entry name" value="Ribosomal_uL24_KOW"/>
</dbReference>
<dbReference type="InterPro" id="IPR008991">
    <property type="entry name" value="Translation_prot_SH3-like_sf"/>
</dbReference>
<dbReference type="NCBIfam" id="TIGR01079">
    <property type="entry name" value="rplX_bact"/>
    <property type="match status" value="1"/>
</dbReference>
<dbReference type="PANTHER" id="PTHR12903">
    <property type="entry name" value="MITOCHONDRIAL RIBOSOMAL PROTEIN L24"/>
    <property type="match status" value="1"/>
</dbReference>
<dbReference type="Pfam" id="PF00467">
    <property type="entry name" value="KOW"/>
    <property type="match status" value="1"/>
</dbReference>
<dbReference type="Pfam" id="PF17136">
    <property type="entry name" value="ribosomal_L24"/>
    <property type="match status" value="1"/>
</dbReference>
<dbReference type="SMART" id="SM00739">
    <property type="entry name" value="KOW"/>
    <property type="match status" value="1"/>
</dbReference>
<dbReference type="SUPFAM" id="SSF50104">
    <property type="entry name" value="Translation proteins SH3-like domain"/>
    <property type="match status" value="1"/>
</dbReference>
<dbReference type="PROSITE" id="PS01108">
    <property type="entry name" value="RIBOSOMAL_L24"/>
    <property type="match status" value="1"/>
</dbReference>
<proteinExistence type="inferred from homology"/>
<feature type="chain" id="PRO_0000355695" description="Large ribosomal subunit protein uL24">
    <location>
        <begin position="1"/>
        <end position="117"/>
    </location>
</feature>
<feature type="region of interest" description="Disordered" evidence="2">
    <location>
        <begin position="1"/>
        <end position="20"/>
    </location>
</feature>
<feature type="compositionally biased region" description="Polar residues" evidence="2">
    <location>
        <begin position="1"/>
        <end position="12"/>
    </location>
</feature>
<name>RL24_MICAN</name>